<keyword id="KW-0238">DNA-binding</keyword>
<keyword id="KW-0479">Metal-binding</keyword>
<keyword id="KW-0539">Nucleus</keyword>
<keyword id="KW-1185">Reference proteome</keyword>
<keyword id="KW-0677">Repeat</keyword>
<keyword id="KW-0804">Transcription</keyword>
<keyword id="KW-0805">Transcription regulation</keyword>
<keyword id="KW-0862">Zinc</keyword>
<keyword id="KW-0863">Zinc-finger</keyword>
<accession>P18748</accession>
<evidence type="ECO:0000255" key="1">
    <source>
        <dbReference type="PROSITE-ProRule" id="PRU00042"/>
    </source>
</evidence>
<evidence type="ECO:0000256" key="2">
    <source>
        <dbReference type="SAM" id="MobiDB-lite"/>
    </source>
</evidence>
<evidence type="ECO:0000305" key="3"/>
<reference key="1">
    <citation type="journal article" date="1989" name="Proc. Natl. Acad. Sci. U.S.A.">
        <title>Evolutionary conserved modules associated with zinc fingers in Xenopus laevis.</title>
        <authorList>
            <person name="Knoechel W."/>
            <person name="Poeting A."/>
            <person name="Koester M."/>
            <person name="el Baradi T."/>
            <person name="Nietfeld W."/>
            <person name="Bouwmeester T."/>
            <person name="Pieler T."/>
        </authorList>
    </citation>
    <scope>NUCLEOTIDE SEQUENCE [MRNA] OF 1-397</scope>
</reference>
<reference key="2">
    <citation type="journal article" date="1989" name="J. Mol. Biol.">
        <title>Second-order repeats in Xenopus laevis finger proteins.</title>
        <authorList>
            <person name="Nietfeld W."/>
            <person name="El-Baradi T."/>
            <person name="Mentzel H."/>
            <person name="Pieler T."/>
            <person name="Koester M."/>
            <person name="Poeting A."/>
            <person name="Knoechel W."/>
        </authorList>
    </citation>
    <scope>NUCLEOTIDE SEQUENCE [MRNA] OF 370-537</scope>
</reference>
<comment type="function">
    <text>May be involved in transcriptional regulation.</text>
</comment>
<comment type="subcellular location">
    <subcellularLocation>
        <location evidence="3">Nucleus</location>
    </subcellularLocation>
</comment>
<comment type="similarity">
    <text evidence="3">Belongs to the krueppel C2H2-type zinc-finger protein family.</text>
</comment>
<proteinExistence type="evidence at transcript level"/>
<protein>
    <recommendedName>
        <fullName>Oocyte zinc finger protein XlCOF29</fullName>
    </recommendedName>
</protein>
<dbReference type="EMBL" id="M25870">
    <property type="protein sequence ID" value="AAA50017.1"/>
    <property type="molecule type" value="mRNA"/>
</dbReference>
<dbReference type="PIR" id="E33282">
    <property type="entry name" value="E33282"/>
</dbReference>
<dbReference type="PIR" id="S06557">
    <property type="entry name" value="S06557"/>
</dbReference>
<dbReference type="SMR" id="P18748"/>
<dbReference type="Proteomes" id="UP000186698">
    <property type="component" value="Unplaced"/>
</dbReference>
<dbReference type="GO" id="GO:0005634">
    <property type="term" value="C:nucleus"/>
    <property type="evidence" value="ECO:0007669"/>
    <property type="project" value="UniProtKB-SubCell"/>
</dbReference>
<dbReference type="GO" id="GO:0000981">
    <property type="term" value="F:DNA-binding transcription factor activity, RNA polymerase II-specific"/>
    <property type="evidence" value="ECO:0000318"/>
    <property type="project" value="GO_Central"/>
</dbReference>
<dbReference type="GO" id="GO:0000978">
    <property type="term" value="F:RNA polymerase II cis-regulatory region sequence-specific DNA binding"/>
    <property type="evidence" value="ECO:0000318"/>
    <property type="project" value="GO_Central"/>
</dbReference>
<dbReference type="GO" id="GO:0008270">
    <property type="term" value="F:zinc ion binding"/>
    <property type="evidence" value="ECO:0007669"/>
    <property type="project" value="UniProtKB-KW"/>
</dbReference>
<dbReference type="GO" id="GO:0006357">
    <property type="term" value="P:regulation of transcription by RNA polymerase II"/>
    <property type="evidence" value="ECO:0000318"/>
    <property type="project" value="GO_Central"/>
</dbReference>
<dbReference type="FunFam" id="3.30.160.60:FF:000295">
    <property type="entry name" value="zinc finger protein 19"/>
    <property type="match status" value="1"/>
</dbReference>
<dbReference type="FunFam" id="3.30.160.60:FF:001158">
    <property type="entry name" value="zinc finger protein 22"/>
    <property type="match status" value="1"/>
</dbReference>
<dbReference type="FunFam" id="3.30.160.60:FF:000671">
    <property type="entry name" value="Zinc finger protein 26"/>
    <property type="match status" value="1"/>
</dbReference>
<dbReference type="FunFam" id="3.30.160.60:FF:001498">
    <property type="entry name" value="Zinc finger protein 404"/>
    <property type="match status" value="1"/>
</dbReference>
<dbReference type="FunFam" id="3.30.160.60:FF:001437">
    <property type="entry name" value="Zinc finger protein 594"/>
    <property type="match status" value="1"/>
</dbReference>
<dbReference type="Gene3D" id="3.30.160.60">
    <property type="entry name" value="Classic Zinc Finger"/>
    <property type="match status" value="6"/>
</dbReference>
<dbReference type="InterPro" id="IPR036236">
    <property type="entry name" value="Znf_C2H2_sf"/>
</dbReference>
<dbReference type="InterPro" id="IPR013087">
    <property type="entry name" value="Znf_C2H2_type"/>
</dbReference>
<dbReference type="PANTHER" id="PTHR24394">
    <property type="entry name" value="ZINC FINGER PROTEIN"/>
    <property type="match status" value="1"/>
</dbReference>
<dbReference type="PANTHER" id="PTHR24394:SF48">
    <property type="entry name" value="ZINC FINGER PROTEIN 771"/>
    <property type="match status" value="1"/>
</dbReference>
<dbReference type="Pfam" id="PF00096">
    <property type="entry name" value="zf-C2H2"/>
    <property type="match status" value="6"/>
</dbReference>
<dbReference type="SMART" id="SM00355">
    <property type="entry name" value="ZnF_C2H2"/>
    <property type="match status" value="6"/>
</dbReference>
<dbReference type="SUPFAM" id="SSF57667">
    <property type="entry name" value="beta-beta-alpha zinc fingers"/>
    <property type="match status" value="3"/>
</dbReference>
<dbReference type="PROSITE" id="PS00028">
    <property type="entry name" value="ZINC_FINGER_C2H2_1"/>
    <property type="match status" value="6"/>
</dbReference>
<dbReference type="PROSITE" id="PS50157">
    <property type="entry name" value="ZINC_FINGER_C2H2_2"/>
    <property type="match status" value="6"/>
</dbReference>
<feature type="chain" id="PRO_0000047823" description="Oocyte zinc finger protein XlCOF29">
    <location>
        <begin position="1"/>
        <end position="537"/>
    </location>
</feature>
<feature type="zinc finger region" description="C2H2-type 1" evidence="1">
    <location>
        <begin position="375"/>
        <end position="397"/>
    </location>
</feature>
<feature type="zinc finger region" description="C2H2-type 2" evidence="1">
    <location>
        <begin position="403"/>
        <end position="425"/>
    </location>
</feature>
<feature type="zinc finger region" description="C2H2-type 3" evidence="1">
    <location>
        <begin position="431"/>
        <end position="453"/>
    </location>
</feature>
<feature type="zinc finger region" description="C2H2-type 4" evidence="1">
    <location>
        <begin position="459"/>
        <end position="481"/>
    </location>
</feature>
<feature type="zinc finger region" description="C2H2-type 5" evidence="1">
    <location>
        <begin position="487"/>
        <end position="509"/>
    </location>
</feature>
<feature type="zinc finger region" description="C2H2-type 6" evidence="1">
    <location>
        <begin position="515"/>
        <end position="537"/>
    </location>
</feature>
<feature type="region of interest" description="Disordered" evidence="2">
    <location>
        <begin position="1"/>
        <end position="21"/>
    </location>
</feature>
<sequence>MGMSEKASDTGMKGKKKDKNERNEKILNLTLEMIYLLTGEGYVIPKKKKSGDDMAPPQSCTDCILEGGCRCHVTNLTGGRALHAPGSVIQKENNKNDKKILELVSNIIQLLTGEEWEYIKRKKALYMEGIKEDPQQLSQWCEYEDKSIVMCNLEATACLNNDPRNDTVFCEHRDLSKFDTSLAEQSLPAIGIKGEPVSCEGANQSDCNINPLAEQIQGTDTPTPIMGCSLNNSLSDNYISNGIKTEATSCEAGNQSDYGNNPVAEVQLTDTTTPVKRCSLNSILSDNYIKIAIKEEPPSWEDENQTHCSINAPGEQNEEIDTPTSIMRFCLNSSLLDSSLLNAIKDDTLSCEGENYSDCSFNPLTEQTSPGCKQFTCSECGKTYTRLYNLKIHLKSHTDDKTFSCSECEECFTDHTDLVIHRRLHLTLKAFPCAECGKCFTNCTNLRAHSKTHTGEKPYSCTECGKTFRDRSHLNIHKKRHTGEKPYTCSECGKCFAYRSNLMVHVRIHTGEKPFSCSKCGKCFTDHANLIVHERMH</sequence>
<organism>
    <name type="scientific">Xenopus laevis</name>
    <name type="common">African clawed frog</name>
    <dbReference type="NCBI Taxonomy" id="8355"/>
    <lineage>
        <taxon>Eukaryota</taxon>
        <taxon>Metazoa</taxon>
        <taxon>Chordata</taxon>
        <taxon>Craniata</taxon>
        <taxon>Vertebrata</taxon>
        <taxon>Euteleostomi</taxon>
        <taxon>Amphibia</taxon>
        <taxon>Batrachia</taxon>
        <taxon>Anura</taxon>
        <taxon>Pipoidea</taxon>
        <taxon>Pipidae</taxon>
        <taxon>Xenopodinae</taxon>
        <taxon>Xenopus</taxon>
        <taxon>Xenopus</taxon>
    </lineage>
</organism>
<name>ZO29_XENLA</name>